<name>Y176_UREPA</name>
<proteinExistence type="inferred from homology"/>
<reference key="1">
    <citation type="journal article" date="2000" name="Nature">
        <title>The complete sequence of the mucosal pathogen Ureaplasma urealyticum.</title>
        <authorList>
            <person name="Glass J.I."/>
            <person name="Lefkowitz E.J."/>
            <person name="Glass J.S."/>
            <person name="Heiner C.R."/>
            <person name="Chen E.Y."/>
            <person name="Cassell G.H."/>
        </authorList>
    </citation>
    <scope>NUCLEOTIDE SEQUENCE [LARGE SCALE GENOMIC DNA]</scope>
    <source>
        <strain>ATCC 700970</strain>
    </source>
</reference>
<sequence>MIYVLYSPNCAVCKKVVRFFRNNQIEITKIIIGEDKIERSMLLDILSLCEDGFGTIISFKTESSKRLNITSKTFLDLSTKELLNLIQNDLNLIRRPLIYQTKNNRPYRLQIGYDSEEIEIFKRAVHEK</sequence>
<dbReference type="EMBL" id="AF222894">
    <property type="protein sequence ID" value="AAF30583.1"/>
    <property type="molecule type" value="Genomic_DNA"/>
</dbReference>
<dbReference type="RefSeq" id="WP_006688944.1">
    <property type="nucleotide sequence ID" value="NC_002162.1"/>
</dbReference>
<dbReference type="SMR" id="Q9PQW7"/>
<dbReference type="STRING" id="273119.UU176"/>
<dbReference type="EnsemblBacteria" id="AAF30583">
    <property type="protein sequence ID" value="AAF30583"/>
    <property type="gene ID" value="UU176"/>
</dbReference>
<dbReference type="GeneID" id="29672709"/>
<dbReference type="KEGG" id="uur:UU176"/>
<dbReference type="eggNOG" id="COG1393">
    <property type="taxonomic scope" value="Bacteria"/>
</dbReference>
<dbReference type="HOGENOM" id="CLU_116644_1_1_14"/>
<dbReference type="OrthoDB" id="9794155at2"/>
<dbReference type="Proteomes" id="UP000000423">
    <property type="component" value="Chromosome"/>
</dbReference>
<dbReference type="GO" id="GO:0016491">
    <property type="term" value="F:oxidoreductase activity"/>
    <property type="evidence" value="ECO:0007669"/>
    <property type="project" value="UniProtKB-KW"/>
</dbReference>
<dbReference type="CDD" id="cd03032">
    <property type="entry name" value="ArsC_Spx"/>
    <property type="match status" value="1"/>
</dbReference>
<dbReference type="Gene3D" id="3.40.30.10">
    <property type="entry name" value="Glutaredoxin"/>
    <property type="match status" value="1"/>
</dbReference>
<dbReference type="InterPro" id="IPR006660">
    <property type="entry name" value="Arsenate_reductase-like"/>
</dbReference>
<dbReference type="InterPro" id="IPR036249">
    <property type="entry name" value="Thioredoxin-like_sf"/>
</dbReference>
<dbReference type="InterPro" id="IPR006504">
    <property type="entry name" value="Tscrpt_reg_Spx/MgsR"/>
</dbReference>
<dbReference type="NCBIfam" id="TIGR01617">
    <property type="entry name" value="arsC_related"/>
    <property type="match status" value="1"/>
</dbReference>
<dbReference type="PANTHER" id="PTHR30041">
    <property type="entry name" value="ARSENATE REDUCTASE"/>
    <property type="match status" value="1"/>
</dbReference>
<dbReference type="PANTHER" id="PTHR30041:SF7">
    <property type="entry name" value="GLOBAL TRANSCRIPTIONAL REGULATOR SPX"/>
    <property type="match status" value="1"/>
</dbReference>
<dbReference type="Pfam" id="PF03960">
    <property type="entry name" value="ArsC"/>
    <property type="match status" value="1"/>
</dbReference>
<dbReference type="SUPFAM" id="SSF52833">
    <property type="entry name" value="Thioredoxin-like"/>
    <property type="match status" value="1"/>
</dbReference>
<dbReference type="PROSITE" id="PS51353">
    <property type="entry name" value="ARSC"/>
    <property type="match status" value="1"/>
</dbReference>
<organism>
    <name type="scientific">Ureaplasma parvum serovar 3 (strain ATCC 700970)</name>
    <dbReference type="NCBI Taxonomy" id="273119"/>
    <lineage>
        <taxon>Bacteria</taxon>
        <taxon>Bacillati</taxon>
        <taxon>Mycoplasmatota</taxon>
        <taxon>Mycoplasmoidales</taxon>
        <taxon>Mycoplasmoidaceae</taxon>
        <taxon>Ureaplasma</taxon>
    </lineage>
</organism>
<protein>
    <recommendedName>
        <fullName>Uncharacterized protein UU176</fullName>
    </recommendedName>
</protein>
<gene>
    <name type="ordered locus">UU176</name>
</gene>
<comment type="similarity">
    <text evidence="2">Belongs to the ArsC family.</text>
</comment>
<accession>Q9PQW7</accession>
<evidence type="ECO:0000255" key="1">
    <source>
        <dbReference type="PROSITE-ProRule" id="PRU01282"/>
    </source>
</evidence>
<evidence type="ECO:0000305" key="2"/>
<keyword id="KW-1015">Disulfide bond</keyword>
<keyword id="KW-0560">Oxidoreductase</keyword>
<keyword id="KW-0676">Redox-active center</keyword>
<keyword id="KW-1185">Reference proteome</keyword>
<feature type="chain" id="PRO_0000162588" description="Uncharacterized protein UU176">
    <location>
        <begin position="1"/>
        <end position="128"/>
    </location>
</feature>
<feature type="disulfide bond" description="Redox-active" evidence="1">
    <location>
        <begin position="10"/>
        <end position="13"/>
    </location>
</feature>